<feature type="signal peptide" evidence="3">
    <location>
        <begin position="1"/>
        <end position="18"/>
    </location>
</feature>
<feature type="chain" id="PRO_0000004019" description="Protocadherin Fat 2">
    <location>
        <begin position="19"/>
        <end position="4351"/>
    </location>
</feature>
<feature type="topological domain" description="Extracellular" evidence="3">
    <location>
        <begin position="19"/>
        <end position="4050"/>
    </location>
</feature>
<feature type="transmembrane region" description="Helical" evidence="3">
    <location>
        <begin position="4051"/>
        <end position="4071"/>
    </location>
</feature>
<feature type="topological domain" description="Cytoplasmic" evidence="3">
    <location>
        <begin position="4072"/>
        <end position="4351"/>
    </location>
</feature>
<feature type="domain" description="Cadherin 1" evidence="4">
    <location>
        <begin position="34"/>
        <end position="148"/>
    </location>
</feature>
<feature type="domain" description="Cadherin 2" evidence="4">
    <location>
        <begin position="149"/>
        <end position="256"/>
    </location>
</feature>
<feature type="domain" description="Cadherin 3" evidence="4">
    <location>
        <begin position="363"/>
        <end position="458"/>
    </location>
</feature>
<feature type="domain" description="Cadherin 4" evidence="4">
    <location>
        <begin position="459"/>
        <end position="564"/>
    </location>
</feature>
<feature type="domain" description="Cadherin 5" evidence="4">
    <location>
        <begin position="565"/>
        <end position="669"/>
    </location>
</feature>
<feature type="domain" description="Cadherin 6" evidence="4">
    <location>
        <begin position="716"/>
        <end position="820"/>
    </location>
</feature>
<feature type="domain" description="Cadherin 7" evidence="4">
    <location>
        <begin position="821"/>
        <end position="925"/>
    </location>
</feature>
<feature type="domain" description="Cadherin 8" evidence="4">
    <location>
        <begin position="926"/>
        <end position="1032"/>
    </location>
</feature>
<feature type="domain" description="Cadherin 9" evidence="4">
    <location>
        <begin position="1033"/>
        <end position="1142"/>
    </location>
</feature>
<feature type="domain" description="Cadherin 10" evidence="4">
    <location>
        <begin position="1138"/>
        <end position="1242"/>
    </location>
</feature>
<feature type="domain" description="Cadherin 11" evidence="4">
    <location>
        <begin position="1243"/>
        <end position="1346"/>
    </location>
</feature>
<feature type="domain" description="Cadherin 12" evidence="4">
    <location>
        <begin position="1350"/>
        <end position="1448"/>
    </location>
</feature>
<feature type="domain" description="Cadherin 13" evidence="4">
    <location>
        <begin position="1449"/>
        <end position="1555"/>
    </location>
</feature>
<feature type="domain" description="Cadherin 14" evidence="4">
    <location>
        <begin position="1556"/>
        <end position="1660"/>
    </location>
</feature>
<feature type="domain" description="Cadherin 15" evidence="4">
    <location>
        <begin position="1661"/>
        <end position="1758"/>
    </location>
</feature>
<feature type="domain" description="Cadherin 16" evidence="4">
    <location>
        <begin position="1759"/>
        <end position="1872"/>
    </location>
</feature>
<feature type="domain" description="Cadherin 17" evidence="4">
    <location>
        <begin position="1873"/>
        <end position="1968"/>
    </location>
</feature>
<feature type="domain" description="Cadherin 18" evidence="4">
    <location>
        <begin position="1969"/>
        <end position="2070"/>
    </location>
</feature>
<feature type="domain" description="Cadherin 19" evidence="4">
    <location>
        <begin position="2071"/>
        <end position="2171"/>
    </location>
</feature>
<feature type="domain" description="Cadherin 20" evidence="4">
    <location>
        <begin position="2172"/>
        <end position="2272"/>
    </location>
</feature>
<feature type="domain" description="Cadherin 21" evidence="4">
    <location>
        <begin position="2273"/>
        <end position="2379"/>
    </location>
</feature>
<feature type="domain" description="Cadherin 22" evidence="4">
    <location>
        <begin position="2380"/>
        <end position="2481"/>
    </location>
</feature>
<feature type="domain" description="Cadherin 23" evidence="4">
    <location>
        <begin position="2482"/>
        <end position="2585"/>
    </location>
</feature>
<feature type="domain" description="Cadherin 24" evidence="4">
    <location>
        <begin position="2586"/>
        <end position="2692"/>
    </location>
</feature>
<feature type="domain" description="Cadherin 25" evidence="4">
    <location>
        <begin position="2693"/>
        <end position="2799"/>
    </location>
</feature>
<feature type="domain" description="Cadherin 26" evidence="4">
    <location>
        <begin position="2800"/>
        <end position="2908"/>
    </location>
</feature>
<feature type="domain" description="Cadherin 27" evidence="4">
    <location>
        <begin position="2909"/>
        <end position="3013"/>
    </location>
</feature>
<feature type="domain" description="Cadherin 28" evidence="4">
    <location>
        <begin position="3014"/>
        <end position="3115"/>
    </location>
</feature>
<feature type="domain" description="Cadherin 29" evidence="4">
    <location>
        <begin position="3116"/>
        <end position="3220"/>
    </location>
</feature>
<feature type="domain" description="Cadherin 30" evidence="4">
    <location>
        <begin position="3221"/>
        <end position="3323"/>
    </location>
</feature>
<feature type="domain" description="Cadherin 31" evidence="4">
    <location>
        <begin position="3324"/>
        <end position="3428"/>
    </location>
</feature>
<feature type="domain" description="Cadherin 32" evidence="4">
    <location>
        <begin position="3429"/>
        <end position="3533"/>
    </location>
</feature>
<feature type="domain" description="Cadherin 33" evidence="4">
    <location>
        <begin position="3534"/>
        <end position="3631"/>
    </location>
</feature>
<feature type="domain" description="Laminin G-like" evidence="6">
    <location>
        <begin position="3775"/>
        <end position="3946"/>
    </location>
</feature>
<feature type="domain" description="EGF-like 1" evidence="5">
    <location>
        <begin position="3949"/>
        <end position="3986"/>
    </location>
</feature>
<feature type="domain" description="EGF-like 2" evidence="5">
    <location>
        <begin position="3988"/>
        <end position="4024"/>
    </location>
</feature>
<feature type="region of interest" description="Disordered" evidence="7">
    <location>
        <begin position="4316"/>
        <end position="4340"/>
    </location>
</feature>
<feature type="glycosylation site" description="N-linked (GlcNAc...) asparagine" evidence="3">
    <location>
        <position position="39"/>
    </location>
</feature>
<feature type="glycosylation site" description="N-linked (GlcNAc...) asparagine" evidence="3">
    <location>
        <position position="210"/>
    </location>
</feature>
<feature type="glycosylation site" description="N-linked (GlcNAc...) asparagine" evidence="3">
    <location>
        <position position="280"/>
    </location>
</feature>
<feature type="glycosylation site" description="N-linked (GlcNAc...) asparagine" evidence="3">
    <location>
        <position position="330"/>
    </location>
</feature>
<feature type="glycosylation site" description="N-linked (GlcNAc...) asparagine" evidence="3">
    <location>
        <position position="459"/>
    </location>
</feature>
<feature type="glycosylation site" description="N-linked (GlcNAc...) asparagine" evidence="3">
    <location>
        <position position="568"/>
    </location>
</feature>
<feature type="glycosylation site" description="N-linked (GlcNAc...) asparagine" evidence="3">
    <location>
        <position position="627"/>
    </location>
</feature>
<feature type="glycosylation site" description="N-linked (GlcNAc...) asparagine" evidence="3">
    <location>
        <position position="789"/>
    </location>
</feature>
<feature type="glycosylation site" description="N-linked (GlcNAc...) asparagine" evidence="3">
    <location>
        <position position="996"/>
    </location>
</feature>
<feature type="glycosylation site" description="N-linked (GlcNAc...) asparagine" evidence="3">
    <location>
        <position position="1175"/>
    </location>
</feature>
<feature type="glycosylation site" description="N-linked (GlcNAc...) asparagine" evidence="3">
    <location>
        <position position="1276"/>
    </location>
</feature>
<feature type="glycosylation site" description="N-linked (GlcNAc...) asparagine" evidence="3">
    <location>
        <position position="1417"/>
    </location>
</feature>
<feature type="glycosylation site" description="N-linked (GlcNAc...) asparagine" evidence="3">
    <location>
        <position position="1899"/>
    </location>
</feature>
<feature type="glycosylation site" description="N-linked (GlcNAc...) asparagine" evidence="3">
    <location>
        <position position="1998"/>
    </location>
</feature>
<feature type="glycosylation site" description="N-linked (GlcNAc...) asparagine" evidence="3">
    <location>
        <position position="2007"/>
    </location>
</feature>
<feature type="glycosylation site" description="N-linked (GlcNAc...) asparagine" evidence="3">
    <location>
        <position position="2102"/>
    </location>
</feature>
<feature type="glycosylation site" description="N-linked (GlcNAc...) asparagine" evidence="3">
    <location>
        <position position="2165"/>
    </location>
</feature>
<feature type="glycosylation site" description="N-linked (GlcNAc...) asparagine" evidence="3">
    <location>
        <position position="2183"/>
    </location>
</feature>
<feature type="glycosylation site" description="N-linked (GlcNAc...) asparagine" evidence="3">
    <location>
        <position position="2325"/>
    </location>
</feature>
<feature type="glycosylation site" description="N-linked (GlcNAc...) asparagine" evidence="3">
    <location>
        <position position="2368"/>
    </location>
</feature>
<feature type="glycosylation site" description="N-linked (GlcNAc...) asparagine" evidence="3">
    <location>
        <position position="2387"/>
    </location>
</feature>
<feature type="glycosylation site" description="N-linked (GlcNAc...) asparagine" evidence="3">
    <location>
        <position position="2430"/>
    </location>
</feature>
<feature type="glycosylation site" description="N-linked (GlcNAc...) asparagine" evidence="3">
    <location>
        <position position="2470"/>
    </location>
</feature>
<feature type="glycosylation site" description="N-linked (GlcNAc...) asparagine" evidence="3">
    <location>
        <position position="2547"/>
    </location>
</feature>
<feature type="glycosylation site" description="N-linked (GlcNAc...) asparagine" evidence="3">
    <location>
        <position position="2597"/>
    </location>
</feature>
<feature type="glycosylation site" description="N-linked (GlcNAc...) asparagine" evidence="3">
    <location>
        <position position="3127"/>
    </location>
</feature>
<feature type="glycosylation site" description="N-linked (GlcNAc...) asparagine" evidence="3">
    <location>
        <position position="3278"/>
    </location>
</feature>
<feature type="glycosylation site" description="N-linked (GlcNAc...) asparagine" evidence="3">
    <location>
        <position position="3312"/>
    </location>
</feature>
<feature type="glycosylation site" description="N-linked (GlcNAc...) asparagine" evidence="3">
    <location>
        <position position="3432"/>
    </location>
</feature>
<feature type="glycosylation site" description="N-linked (GlcNAc...) asparagine" evidence="3">
    <location>
        <position position="3603"/>
    </location>
</feature>
<feature type="glycosylation site" description="N-linked (GlcNAc...) asparagine" evidence="3">
    <location>
        <position position="3770"/>
    </location>
</feature>
<feature type="glycosylation site" description="N-linked (GlcNAc...) asparagine" evidence="3">
    <location>
        <position position="3774"/>
    </location>
</feature>
<feature type="glycosylation site" description="N-linked (GlcNAc...) asparagine" evidence="3">
    <location>
        <position position="3815"/>
    </location>
</feature>
<feature type="glycosylation site" description="N-linked (GlcNAc...) asparagine" evidence="3">
    <location>
        <position position="3842"/>
    </location>
</feature>
<feature type="glycosylation site" description="N-linked (GlcNAc...) asparagine" evidence="3">
    <location>
        <position position="3875"/>
    </location>
</feature>
<feature type="glycosylation site" description="N-linked (GlcNAc...) asparagine" evidence="3">
    <location>
        <position position="3906"/>
    </location>
</feature>
<feature type="glycosylation site" description="N-linked (GlcNAc...) asparagine" evidence="3">
    <location>
        <position position="3991"/>
    </location>
</feature>
<feature type="disulfide bond" evidence="1">
    <location>
        <begin position="3914"/>
        <end position="3946"/>
    </location>
</feature>
<feature type="disulfide bond" evidence="1">
    <location>
        <begin position="3953"/>
        <end position="3964"/>
    </location>
</feature>
<feature type="disulfide bond" evidence="1">
    <location>
        <begin position="3958"/>
        <end position="3974"/>
    </location>
</feature>
<feature type="disulfide bond" evidence="1">
    <location>
        <begin position="3976"/>
        <end position="3985"/>
    </location>
</feature>
<feature type="disulfide bond" evidence="1">
    <location>
        <begin position="3992"/>
        <end position="4003"/>
    </location>
</feature>
<feature type="disulfide bond" evidence="1">
    <location>
        <begin position="3997"/>
        <end position="4012"/>
    </location>
</feature>
<feature type="disulfide bond" evidence="1">
    <location>
        <begin position="4014"/>
        <end position="4023"/>
    </location>
</feature>
<feature type="mutagenesis site" description="Increased localization to Golgi apparatus. Has no effect on cell migration." evidence="9">
    <original>K</original>
    <variation>N</variation>
    <location>
        <position position="3588"/>
    </location>
</feature>
<feature type="mutagenesis site" description="Increased localization to Golgi apparatus. Has no effect on cell migration." evidence="9">
    <original>R</original>
    <variation>Q</variation>
    <location>
        <position position="3651"/>
    </location>
</feature>
<proteinExistence type="evidence at protein level"/>
<accession>O88277</accession>
<gene>
    <name type="primary">Fat2</name>
    <name type="synonym">Fath2</name>
    <name type="synonym">Megf1</name>
</gene>
<keyword id="KW-0106">Calcium</keyword>
<keyword id="KW-0130">Cell adhesion</keyword>
<keyword id="KW-0965">Cell junction</keyword>
<keyword id="KW-1003">Cell membrane</keyword>
<keyword id="KW-0903">Direct protein sequencing</keyword>
<keyword id="KW-1015">Disulfide bond</keyword>
<keyword id="KW-0245">EGF-like domain</keyword>
<keyword id="KW-0325">Glycoprotein</keyword>
<keyword id="KW-0333">Golgi apparatus</keyword>
<keyword id="KW-0472">Membrane</keyword>
<keyword id="KW-1185">Reference proteome</keyword>
<keyword id="KW-0677">Repeat</keyword>
<keyword id="KW-0732">Signal</keyword>
<keyword id="KW-0812">Transmembrane</keyword>
<keyword id="KW-1133">Transmembrane helix</keyword>
<evidence type="ECO:0000250" key="1"/>
<evidence type="ECO:0000250" key="2">
    <source>
        <dbReference type="UniProtKB" id="Q9NYQ8"/>
    </source>
</evidence>
<evidence type="ECO:0000255" key="3"/>
<evidence type="ECO:0000255" key="4">
    <source>
        <dbReference type="PROSITE-ProRule" id="PRU00043"/>
    </source>
</evidence>
<evidence type="ECO:0000255" key="5">
    <source>
        <dbReference type="PROSITE-ProRule" id="PRU00076"/>
    </source>
</evidence>
<evidence type="ECO:0000255" key="6">
    <source>
        <dbReference type="PROSITE-ProRule" id="PRU00122"/>
    </source>
</evidence>
<evidence type="ECO:0000256" key="7">
    <source>
        <dbReference type="SAM" id="MobiDB-lite"/>
    </source>
</evidence>
<evidence type="ECO:0000269" key="8">
    <source>
    </source>
</evidence>
<evidence type="ECO:0000269" key="9">
    <source>
    </source>
</evidence>
<evidence type="ECO:0000269" key="10">
    <source>
    </source>
</evidence>
<evidence type="ECO:0000303" key="11">
    <source>
    </source>
</evidence>
<evidence type="ECO:0000305" key="12"/>
<protein>
    <recommendedName>
        <fullName>Protocadherin Fat 2</fullName>
    </recommendedName>
    <alternativeName>
        <fullName>Multiple epidermal growth factor-like domains protein 1</fullName>
        <shortName>Multiple EGF-like domains protein 1</shortName>
    </alternativeName>
</protein>
<dbReference type="EMBL" id="AB011527">
    <property type="protein sequence ID" value="BAA32458.1"/>
    <property type="molecule type" value="mRNA"/>
</dbReference>
<dbReference type="PIR" id="T00252">
    <property type="entry name" value="T00252"/>
</dbReference>
<dbReference type="RefSeq" id="NP_075243.1">
    <property type="nucleotide sequence ID" value="NM_022954.1"/>
</dbReference>
<dbReference type="SMR" id="O88277"/>
<dbReference type="BioGRID" id="249241">
    <property type="interactions" value="1"/>
</dbReference>
<dbReference type="FunCoup" id="O88277">
    <property type="interactions" value="180"/>
</dbReference>
<dbReference type="STRING" id="10116.ENSRNOP00000055459"/>
<dbReference type="GlyCosmos" id="O88277">
    <property type="glycosylation" value="37 sites, No reported glycans"/>
</dbReference>
<dbReference type="GlyGen" id="O88277">
    <property type="glycosylation" value="38 sites"/>
</dbReference>
<dbReference type="iPTMnet" id="O88277"/>
<dbReference type="PhosphoSitePlus" id="O88277"/>
<dbReference type="PaxDb" id="10116-ENSRNOP00000055459"/>
<dbReference type="GeneID" id="65048"/>
<dbReference type="KEGG" id="rno:65048"/>
<dbReference type="UCSC" id="RGD:620656">
    <property type="organism name" value="rat"/>
</dbReference>
<dbReference type="AGR" id="RGD:620656"/>
<dbReference type="CTD" id="2196"/>
<dbReference type="RGD" id="620656">
    <property type="gene designation" value="Fat2"/>
</dbReference>
<dbReference type="eggNOG" id="KOG1219">
    <property type="taxonomic scope" value="Eukaryota"/>
</dbReference>
<dbReference type="InParanoid" id="O88277"/>
<dbReference type="OrthoDB" id="25815at9989"/>
<dbReference type="PhylomeDB" id="O88277"/>
<dbReference type="PRO" id="PR:O88277"/>
<dbReference type="Proteomes" id="UP000002494">
    <property type="component" value="Unplaced"/>
</dbReference>
<dbReference type="GO" id="GO:0005912">
    <property type="term" value="C:adherens junction"/>
    <property type="evidence" value="ECO:0000250"/>
    <property type="project" value="UniProtKB"/>
</dbReference>
<dbReference type="GO" id="GO:0005794">
    <property type="term" value="C:Golgi apparatus"/>
    <property type="evidence" value="ECO:0007669"/>
    <property type="project" value="UniProtKB-SubCell"/>
</dbReference>
<dbReference type="GO" id="GO:0005886">
    <property type="term" value="C:plasma membrane"/>
    <property type="evidence" value="ECO:0007669"/>
    <property type="project" value="UniProtKB-SubCell"/>
</dbReference>
<dbReference type="GO" id="GO:0005509">
    <property type="term" value="F:calcium ion binding"/>
    <property type="evidence" value="ECO:0007669"/>
    <property type="project" value="InterPro"/>
</dbReference>
<dbReference type="GO" id="GO:0098609">
    <property type="term" value="P:cell-cell adhesion"/>
    <property type="evidence" value="ECO:0000318"/>
    <property type="project" value="GO_Central"/>
</dbReference>
<dbReference type="GO" id="GO:0031589">
    <property type="term" value="P:cell-substrate adhesion"/>
    <property type="evidence" value="ECO:0000250"/>
    <property type="project" value="UniProtKB"/>
</dbReference>
<dbReference type="GO" id="GO:0010631">
    <property type="term" value="P:epithelial cell migration"/>
    <property type="evidence" value="ECO:0000250"/>
    <property type="project" value="UniProtKB"/>
</dbReference>
<dbReference type="GO" id="GO:0007156">
    <property type="term" value="P:homophilic cell adhesion via plasma membrane adhesion molecules"/>
    <property type="evidence" value="ECO:0000314"/>
    <property type="project" value="UniProtKB"/>
</dbReference>
<dbReference type="CDD" id="cd11304">
    <property type="entry name" value="Cadherin_repeat"/>
    <property type="match status" value="32"/>
</dbReference>
<dbReference type="CDD" id="cd00054">
    <property type="entry name" value="EGF_CA"/>
    <property type="match status" value="2"/>
</dbReference>
<dbReference type="CDD" id="cd00110">
    <property type="entry name" value="LamG"/>
    <property type="match status" value="1"/>
</dbReference>
<dbReference type="FunFam" id="2.60.40.60:FF:000116">
    <property type="entry name" value="Dachsous cadherin-related 2"/>
    <property type="match status" value="1"/>
</dbReference>
<dbReference type="FunFam" id="2.60.40.60:FF:000015">
    <property type="entry name" value="FAT atypical cadherin 1"/>
    <property type="match status" value="1"/>
</dbReference>
<dbReference type="FunFam" id="2.60.40.60:FF:000021">
    <property type="entry name" value="FAT atypical cadherin 1"/>
    <property type="match status" value="2"/>
</dbReference>
<dbReference type="FunFam" id="2.60.40.60:FF:000026">
    <property type="entry name" value="FAT atypical cadherin 1"/>
    <property type="match status" value="2"/>
</dbReference>
<dbReference type="FunFam" id="2.60.40.60:FF:000032">
    <property type="entry name" value="FAT atypical cadherin 1"/>
    <property type="match status" value="1"/>
</dbReference>
<dbReference type="FunFam" id="2.60.40.60:FF:000033">
    <property type="entry name" value="FAT atypical cadherin 1"/>
    <property type="match status" value="1"/>
</dbReference>
<dbReference type="FunFam" id="2.60.40.60:FF:000037">
    <property type="entry name" value="FAT atypical cadherin 1"/>
    <property type="match status" value="2"/>
</dbReference>
<dbReference type="FunFam" id="2.60.40.60:FF:000041">
    <property type="entry name" value="FAT atypical cadherin 1"/>
    <property type="match status" value="1"/>
</dbReference>
<dbReference type="FunFam" id="2.60.40.60:FF:000051">
    <property type="entry name" value="FAT atypical cadherin 1"/>
    <property type="match status" value="1"/>
</dbReference>
<dbReference type="FunFam" id="2.60.40.60:FF:000065">
    <property type="entry name" value="FAT atypical cadherin 1"/>
    <property type="match status" value="1"/>
</dbReference>
<dbReference type="FunFam" id="2.60.40.60:FF:000066">
    <property type="entry name" value="FAT atypical cadherin 1"/>
    <property type="match status" value="1"/>
</dbReference>
<dbReference type="FunFam" id="2.60.40.60:FF:000071">
    <property type="entry name" value="FAT atypical cadherin 1"/>
    <property type="match status" value="1"/>
</dbReference>
<dbReference type="FunFam" id="2.60.40.60:FF:000075">
    <property type="entry name" value="FAT atypical cadherin 1"/>
    <property type="match status" value="1"/>
</dbReference>
<dbReference type="FunFam" id="2.60.40.60:FF:000079">
    <property type="entry name" value="FAT atypical cadherin 1"/>
    <property type="match status" value="1"/>
</dbReference>
<dbReference type="FunFam" id="2.60.40.60:FF:000080">
    <property type="entry name" value="FAT atypical cadherin 1"/>
    <property type="match status" value="1"/>
</dbReference>
<dbReference type="FunFam" id="2.60.40.60:FF:000089">
    <property type="entry name" value="FAT atypical cadherin 1"/>
    <property type="match status" value="1"/>
</dbReference>
<dbReference type="FunFam" id="2.60.120.200:FF:000139">
    <property type="entry name" value="FAT atypical cadherin 2"/>
    <property type="match status" value="1"/>
</dbReference>
<dbReference type="FunFam" id="2.60.40.60:FF:000186">
    <property type="entry name" value="FAT atypical cadherin 2"/>
    <property type="match status" value="1"/>
</dbReference>
<dbReference type="FunFam" id="2.60.40.60:FF:000194">
    <property type="entry name" value="FAT atypical cadherin 2"/>
    <property type="match status" value="1"/>
</dbReference>
<dbReference type="FunFam" id="2.60.40.60:FF:000197">
    <property type="entry name" value="FAT atypical cadherin 2"/>
    <property type="match status" value="1"/>
</dbReference>
<dbReference type="FunFam" id="2.60.40.60:FF:000207">
    <property type="entry name" value="FAT atypical cadherin 2"/>
    <property type="match status" value="1"/>
</dbReference>
<dbReference type="FunFam" id="2.60.40.60:FF:000215">
    <property type="entry name" value="FAT atypical cadherin 2"/>
    <property type="match status" value="1"/>
</dbReference>
<dbReference type="FunFam" id="2.60.40.60:FF:000024">
    <property type="entry name" value="FAT atypical cadherin 3"/>
    <property type="match status" value="1"/>
</dbReference>
<dbReference type="FunFam" id="2.60.40.60:FF:000039">
    <property type="entry name" value="FAT atypical cadherin 3"/>
    <property type="match status" value="1"/>
</dbReference>
<dbReference type="FunFam" id="2.60.40.60:FF:000053">
    <property type="entry name" value="FAT atypical cadherin 3"/>
    <property type="match status" value="1"/>
</dbReference>
<dbReference type="FunFam" id="2.60.40.60:FF:000058">
    <property type="entry name" value="FAT atypical cadherin 3"/>
    <property type="match status" value="1"/>
</dbReference>
<dbReference type="FunFam" id="2.60.40.60:FF:000059">
    <property type="entry name" value="FAT atypical cadherin 3"/>
    <property type="match status" value="1"/>
</dbReference>
<dbReference type="FunFam" id="2.60.40.60:FF:000061">
    <property type="entry name" value="FAT atypical cadherin 3"/>
    <property type="match status" value="1"/>
</dbReference>
<dbReference type="FunFam" id="2.10.25.10:FF:000057">
    <property type="entry name" value="protocadherin Fat 1 isoform X2"/>
    <property type="match status" value="2"/>
</dbReference>
<dbReference type="FunFam" id="2.60.40.60:FF:000178">
    <property type="entry name" value="Protocadherin Fat 2"/>
    <property type="match status" value="1"/>
</dbReference>
<dbReference type="FunFam" id="2.60.40.60:FF:000198">
    <property type="entry name" value="Protocadherin Fat 2"/>
    <property type="match status" value="1"/>
</dbReference>
<dbReference type="FunFam" id="2.60.40.60:FF:000035">
    <property type="entry name" value="Protocadherin Fat 3"/>
    <property type="match status" value="1"/>
</dbReference>
<dbReference type="Gene3D" id="2.60.120.200">
    <property type="match status" value="1"/>
</dbReference>
<dbReference type="Gene3D" id="2.60.40.60">
    <property type="entry name" value="Cadherins"/>
    <property type="match status" value="33"/>
</dbReference>
<dbReference type="Gene3D" id="2.10.25.10">
    <property type="entry name" value="Laminin"/>
    <property type="match status" value="2"/>
</dbReference>
<dbReference type="InterPro" id="IPR039808">
    <property type="entry name" value="Cadherin"/>
</dbReference>
<dbReference type="InterPro" id="IPR002126">
    <property type="entry name" value="Cadherin-like_dom"/>
</dbReference>
<dbReference type="InterPro" id="IPR015919">
    <property type="entry name" value="Cadherin-like_sf"/>
</dbReference>
<dbReference type="InterPro" id="IPR020894">
    <property type="entry name" value="Cadherin_CS"/>
</dbReference>
<dbReference type="InterPro" id="IPR013320">
    <property type="entry name" value="ConA-like_dom_sf"/>
</dbReference>
<dbReference type="InterPro" id="IPR001881">
    <property type="entry name" value="EGF-like_Ca-bd_dom"/>
</dbReference>
<dbReference type="InterPro" id="IPR000742">
    <property type="entry name" value="EGF-like_dom"/>
</dbReference>
<dbReference type="InterPro" id="IPR001791">
    <property type="entry name" value="Laminin_G"/>
</dbReference>
<dbReference type="PANTHER" id="PTHR24027">
    <property type="entry name" value="CADHERIN-23"/>
    <property type="match status" value="1"/>
</dbReference>
<dbReference type="PANTHER" id="PTHR24027:SF423">
    <property type="entry name" value="PROTOCADHERIN-16"/>
    <property type="match status" value="1"/>
</dbReference>
<dbReference type="Pfam" id="PF00028">
    <property type="entry name" value="Cadherin"/>
    <property type="match status" value="27"/>
</dbReference>
<dbReference type="Pfam" id="PF00008">
    <property type="entry name" value="EGF"/>
    <property type="match status" value="2"/>
</dbReference>
<dbReference type="Pfam" id="PF02210">
    <property type="entry name" value="Laminin_G_2"/>
    <property type="match status" value="1"/>
</dbReference>
<dbReference type="PRINTS" id="PR00205">
    <property type="entry name" value="CADHERIN"/>
</dbReference>
<dbReference type="SMART" id="SM00112">
    <property type="entry name" value="CA"/>
    <property type="match status" value="33"/>
</dbReference>
<dbReference type="SMART" id="SM00181">
    <property type="entry name" value="EGF"/>
    <property type="match status" value="2"/>
</dbReference>
<dbReference type="SMART" id="SM00179">
    <property type="entry name" value="EGF_CA"/>
    <property type="match status" value="2"/>
</dbReference>
<dbReference type="SMART" id="SM00282">
    <property type="entry name" value="LamG"/>
    <property type="match status" value="1"/>
</dbReference>
<dbReference type="SUPFAM" id="SSF49313">
    <property type="entry name" value="Cadherin-like"/>
    <property type="match status" value="33"/>
</dbReference>
<dbReference type="SUPFAM" id="SSF49899">
    <property type="entry name" value="Concanavalin A-like lectins/glucanases"/>
    <property type="match status" value="1"/>
</dbReference>
<dbReference type="SUPFAM" id="SSF57196">
    <property type="entry name" value="EGF/Laminin"/>
    <property type="match status" value="2"/>
</dbReference>
<dbReference type="PROSITE" id="PS00232">
    <property type="entry name" value="CADHERIN_1"/>
    <property type="match status" value="14"/>
</dbReference>
<dbReference type="PROSITE" id="PS50268">
    <property type="entry name" value="CADHERIN_2"/>
    <property type="match status" value="33"/>
</dbReference>
<dbReference type="PROSITE" id="PS00022">
    <property type="entry name" value="EGF_1"/>
    <property type="match status" value="2"/>
</dbReference>
<dbReference type="PROSITE" id="PS01186">
    <property type="entry name" value="EGF_2"/>
    <property type="match status" value="2"/>
</dbReference>
<dbReference type="PROSITE" id="PS50026">
    <property type="entry name" value="EGF_3"/>
    <property type="match status" value="2"/>
</dbReference>
<dbReference type="PROSITE" id="PS50025">
    <property type="entry name" value="LAM_G_DOMAIN"/>
    <property type="match status" value="1"/>
</dbReference>
<sequence>MTLVLLGLAILLLHRAACEKSLEETIPPLSWRFTHSLYNATIYENSAPKTYVESPVKMGMYLAEPHWVVKYRIISGDAAGVFKTEEHVVGNFCFLRIRTKSSNTALLNREVRDSYTLIVQASDKSLEFEALTQVVVHILDQNDLKPLFSPPSYRVTISEDRPLKSPICKVTATDADLGQNAEFYYAFNARSEVFAIHPTSGVVTVAGKLNVTRRGKYELQVLAVDRMRKISEGNGFGNLASLVIRVEPVHRKPPAINLVVLNPPEGDEGDIYAIVTVDTNGSGAEVDSLEVVGGDPGKYFKVLRSYAQGNEFNLVAVRDINWAEHPHGFNISLQTHSWSRFPPHSIIRAFHLPSWKLANLRFEKAVYRVKLSEFSPPGSRVALVKVTTALPNLRYSLKPSSRNTAFKLNARTGLITTTKLVDFHEQNQYQLHVKTSLGQATTTVIIDIVDCNNHAPVFNRSSYEGTLDENIPPGTSVLTVTATDQDHGDNGHITYSIAGPKAVPFSIDPLLGVISTTKPMDYELMKRIYTFRVRASDWGSPFRQEKEVSVSLRLKNLNDNQPMFEEVNCTVSLRQDVPVGKSIMAVSAIDMDELQNLKYEIVSGNEQDYFHLNHFSGVISLKRSFMNLTAVRPTIYSLKITASDGKNYASPTTLKVTVVKDPHSEVPVQCDKTGVLTHITKTILQSAGLQSQELGEEEFTSLSNYQINHHSPQFEDHFPQSIDILEQVPINTPLARLAATDPDTGFHGKLVYVISDGNEEGCFDIELETGLLMVAAALDYETTSFYVLNVTVYDLGTPPKSSWKLLTVTVKDWNDNPPRFPPGGYQLTISEDTEVGTTIAELKTEDADSEDNRRVRYTLLTPTEKFSLHPFTGELVVTGHLDRESESQYILKAEARDQPTKGHQLFSVTDLIVTLEDINDNPPQCITEHRRLKVPEDMPLGTVLTFLDASDPDLGPAGEVKYILVEDAHGTFQVHPMTGALSLEKELDFERRAGYNLSFWASDSGKPLSRRTLCHVEVLVMDVNENLHSPHFSSFVYQGQVQENSPAGTPVMVVTAQDDDSGLDGELQYFLRAGTGLETFSINQDTGMLETLAPLDREFTPYYWLTVLAVDRGSVPLSAVTEVYIEVTDINDNIPSMSRPVFYPSVLEDAPLGTSVLQLEAWDPDSSSQGKLTFNLTSGNHLGHFIVHPFTGLLTTAKQLDRENKDEYVLEVTVQDNGDPSLRSTSRVVVCILDVNDNPPMFSHKLFNVRLSERLSPLSPEPVYRLVASDPDEGLNGSVTYSIEESDEESFRIDPVTGVVSSSSTFAAGEYNILTIKATDSGQPALSTSVRLHIEWIPQPRPSSIPLSFDESYYSFTVMETDPVNHMVGVISVEGRPGLFWFHISDGDKDMDFDIEKTTGSIVIARPLDTRRKSSYNLTVEVTDGFHTIATQVHIFMIANINHHRPQFLQDHYEIRVPQDTLPGVELLRVQATDQDHGKGLIYTILSSQDPGSANLFQLDPSSGVLVTVGTLELHSGPSQHILTVMVRDQEMPIKRNFVWVTIHVEDGNLHSPHFTQLRYEANVPDTTAPGTELLQVRAVDADRGANAEIHYSFLKGNSDGFFNIDSLLGIITVAQRLYHVHLTRHALTVKAEDQGSPRRHDLALVVIHVHPSDSSAPVFSKDEYFIEIPESVPIGSPILLLSAGSSSEVTYELREGNKDSVFSMNSYSGLISTQKRLDHEKVPSYRLRIRGSNMAGVFTEVVALVYIIDENDNPPAFGKPTFLGHISEAAPLHSLILGEDNSPLVVRASDSDREANSLLVYKILEPEALKFFKIDPSMGTLTTTSELDFEDTPLFQFNIYVHDQGTPILFAPRSAKVIIHVRDVNDSPPRFSEQIYEVAVVEPIHPGMGLLTVQAEDNDSRVTYSIKTSNADEAVTIHPTTGQISVVNPATLRLFQKFSIRASDGLYHDTAVVKISLTQVLDKSLQFDQDVYRARVTENTPHRKALVILGVHGNHLNDTLSYFLLNGTDLFHMIESAGVLQTRGGTFDREQQDTHEVAVEVRDNRVPQRVAQALVRVSVEDVNDNIPEFQHLPYYTVIQDGTEPGDVLFQVSATDKDLGANGSVTYGFAEDYAYFRIDPYVGDISLKKPFDYQALNKYHLRVIARDSGIPPLQTEVEVHVTVRNKSNPLFQSPYYKVKVPENITLYTPILHTQARSPEGLRLIYNIVEEEPLMLFTTDFKTGVLTVTGPLDYESKNKHVFTVRATDTALGSFSEATVEVLVEDINDNPPTFSQLVYTTSVSEGSPAQTPVIQLLASDQDSGQNQDVSYQIVEDGSDVSKFFRINGSTGEIFTIQELDYETHQHFRVKVRAMDKGDPPLTGETLVVVNVSDINDNPPKFREPQYEANVSELATCGHLVLKVQALDPDIGDTSRLEYLILSGNQDRHFSINSTSGIISMFNLCKKQLDSSYNLRVGASDGVFRATVPVYINTTNANKYSPEFQQNVYEAELAENAKVGTKVIELLAIDKDSGPYGTVDYTIINKLAGERFFINPRGQITTLQKLDRENSTERVIAIKVMARDGGGKVAFCTVKIILTDENDNAPQFKASGYTVSIPSNVSRDSPIIQVLAYDADEGRNADVTYSVDSTEDLAEEIIEVNPTTGVVKVKESLVGLENRAVDFNIKAQDGGPPHWDSLVPVRLQVVPNEIPLPKFSEPLYTFSAPEDLPEGSEIGSVKAVAAQDPIIYSLVQGTTPESNSDDVFSLDQDTGVLKVRKAMDHESTKWYQIDLMAHCPHEDTDLVSLVSVSIQVEDVNDNRPVFEADPYKAFLTENMPGGTTVIQVTANDQDTGSDGQVSYRLSVEPGSNIHELFAVDSESGWITTLQELDCETQQTYRFYVVAFDHGQTIQLSSQALVEVSITDENDNPPRFASEDYRGSVVENNEPGELVATLKTLDADVSDQNRQVTCYITEGDPLGQFSISQVGDEWRISSRKTLDREHIAKYLLRVTASDGKFQASVPVEVFVVDINDNSPQCSQLLYTGKVREDVTPGHFILKVSAIDVDMDTNAQITYSLHGPGAQEFKLDPHTGELTTLTVLDRERKDVYNLVAKATDGGGQSCQAEVTLHIEDVNDNAPRFFPSHCDVAVFDNTTVKTPVAVVFARDPDQGANAQVVYSLTDSADGQFSIDATSGVIRLEKPLQVRASSAVELTVRASDLGTPIPLSTLGTVTVSVVGLEDYLPIFLNAEHSTQVPEDAPIDMEVLHLATLTRPGSEKTGYHITGGNEQGKFRLDAHTGILYVNGSLDFETNPKYFLSIECSRKSSSSLSDVTTIVINVTDVNEHHPRFTHDLYTVRVLENAVVGDVILTVSASDDDGPVNSAITYSLVGGNQLGHFTINPKKGKLQVAKALDWEQTPSYSLRLRATDSGQPPLHEDTEVAVEVVDVNDNPPRFFQLNYSTSVQENSPIGIKVLQLILDDPDSPQNGPPYFFRITEGNTGSVFRVTPDGWLVTAASLSKKAREWYQLHIEVSDSGLPPLSSSTLVRVQVTEQSRYPPSTLPLEISITKGEEEFQGGMIGKIHATDRDPQDTLTYSLEQEGGLDRYFTVGASDGKIIASQGLPHGRYSFNVTVSDGTFTTTTGVHVHVWHMEPEVPQQAVWLGFHQLTPEELVSDHWRNLQRFLSNLLDVKRANIHLASLQPAEVTAGVDVLLVFERHSGTSYDLQELASAIAHSVREIEHSVGIRMRSALPVVPCQGQSCQDQTCQETVSLEPRVGPSYSTARLSILTPRHHLGRNCSCNGTTLRFSGQSYVQYRPLEAQNWQIHFYLKTLQPWALLMFTNETASISLKLANGFSHLEYHCPGGFYGNLSSRYPVNDGQWHSMLLEERDTSVHLLVDITDNASLVIPEECQGLRTERQLLLGGLVPSNPSSNVSLGFEGCLDAVVVNGERLELLGREKKMEGRLETWALSQCCWPGTACSQSPCLNGGSCSPALGSGYLCRCPPPFSGRNCELGRENCTSAPCQEGGTCVSSPEGTSCNCPHPYTGDRCEMEARGCSGGHCLITPEIKRGDWGQQEFLVITVALPLVIIATVGLLLYCRRRKSHKPVTMEDPDLLARSIGVDTQASPAIELDPLNTSSCNNLNQPEPSKTSVPNELVTFGPSSKQRPMVCSVPPRLPPAAVSSHPGHEPIIKRTWSGEELVYPSGAAVWPPTYSRKKHWEYPHPETMQGTLPPSPRRHVGPAVMPDPTGLYGGFPFPLELENKRAPLPPRYSNQNLEDLMPPRPPSPREHLLAPCLNEYTAISYYHSQFRQGGGGPCLAEGGYKGVSMRLSRAGPSYADCEVNGGPATGRSQPRAPPNYEGSDMVESDYGSCEEVMF</sequence>
<comment type="function">
    <text evidence="9 11">Involved in the regulation of cell migration (PubMed:29053796). May be involved in mediating the organization of the parallel fibers of granule cells during cerebellar development (PubMed:12213440).</text>
</comment>
<comment type="subunit">
    <text evidence="8">Homodimer.</text>
</comment>
<comment type="subcellular location">
    <subcellularLocation>
        <location evidence="12">Cell membrane</location>
        <topology evidence="12">Single-pass membrane protein</topology>
    </subcellularLocation>
    <subcellularLocation>
        <location evidence="2">Cell junction</location>
    </subcellularLocation>
    <subcellularLocation>
        <location evidence="8 9">Golgi apparatus</location>
        <location evidence="8 9">trans-Golgi network</location>
    </subcellularLocation>
    <text evidence="2">Localized at adhesion zippers (early state of adherens junctions) of keratinocytes.</text>
</comment>
<comment type="tissue specificity">
    <text evidence="8 10">Cerebellum-specific expression. Expressed in thin parallel fibers of cerebellar granule cells.</text>
</comment>
<comment type="developmental stage">
    <text evidence="8">In the developing cerebellum, expressed in granule cells in the inner external germinal layer and in migrating granule cells whereas proliferating cells in the outer extessornal germinal layer did not shown expression. Expression levels in the internal granule cell layer peak during the third postnatal week and remain considerably high in the adult cerebellum.</text>
</comment>
<reference key="1">
    <citation type="journal article" date="1998" name="Genomics">
        <title>Identification of high-molecular-weight proteins with multiple EGF-like motifs by motif-trap screening.</title>
        <authorList>
            <person name="Nakayama M."/>
            <person name="Nakajima D."/>
            <person name="Nagase T."/>
            <person name="Nomura N."/>
            <person name="Seki N."/>
            <person name="Ohara O."/>
        </authorList>
    </citation>
    <scope>NUCLEOTIDE SEQUENCE [MRNA]</scope>
    <scope>TISSUE SPECIFICITY</scope>
    <source>
        <strain>Sprague-Dawley</strain>
        <tissue>Brain</tissue>
    </source>
</reference>
<reference key="2">
    <citation type="submission" date="2007-09" db="UniProtKB">
        <authorList>
            <person name="Lubec G."/>
            <person name="Kang S.U."/>
            <person name="Lubec S."/>
        </authorList>
    </citation>
    <scope>PROTEIN SEQUENCE OF 673-681; 2566-2572; 2968-2976 AND 3081-3088</scope>
    <scope>IDENTIFICATION BY MASS SPECTROMETRY</scope>
    <source>
        <strain>Sprague-Dawley</strain>
        <tissue>Brain</tissue>
    </source>
</reference>
<reference key="3">
    <citation type="journal article" date="2002" name="Mol. Cell. Neurosci.">
        <title>MEGF1/fat2 proteins containing extraordinarily large extracellular domains are localized to thin parallel fibers of cerebellar granule cells.</title>
        <authorList>
            <person name="Nakayama M."/>
            <person name="Nakajima D."/>
            <person name="Yoshimura R."/>
            <person name="Endo Y."/>
            <person name="Ohara O."/>
        </authorList>
    </citation>
    <scope>FUNCTION</scope>
    <scope>SUBCELLULAR LOCATION</scope>
    <scope>TISSUE SPECIFICITY</scope>
    <scope>SUBUNIT</scope>
    <scope>DEVELOPMENTAL STAGE</scope>
</reference>
<reference key="4">
    <citation type="journal article" date="2017" name="Brain">
        <title>Exome sequencing and network analysis identifies shared mechanisms underlying spinocerebellar ataxia.</title>
        <authorList>
            <person name="Nibbeling E.A.R."/>
            <person name="Duarri A."/>
            <person name="Verschuuren-Bemelmans C.C."/>
            <person name="Fokkens M.R."/>
            <person name="Karjalainen J.M."/>
            <person name="Smeets C.J.L.M."/>
            <person name="de Boer-Bergsma J.J."/>
            <person name="van der Vries G."/>
            <person name="Dooijes D."/>
            <person name="Bampi G.B."/>
            <person name="van Diemen C."/>
            <person name="Brunt E."/>
            <person name="Ippel E."/>
            <person name="Kremer B."/>
            <person name="Vlak M."/>
            <person name="Adir N."/>
            <person name="Wijmenga C."/>
            <person name="van de Warrenburg B.P.C."/>
            <person name="Franke L."/>
            <person name="Sinke R.J."/>
            <person name="Verbeek D.S."/>
        </authorList>
    </citation>
    <scope>FUNCTION</scope>
    <scope>SUBCELLULAR LOCATION</scope>
    <scope>MUTAGENESIS OF LYS-3588 AND ARG-3651</scope>
</reference>
<organism>
    <name type="scientific">Rattus norvegicus</name>
    <name type="common">Rat</name>
    <dbReference type="NCBI Taxonomy" id="10116"/>
    <lineage>
        <taxon>Eukaryota</taxon>
        <taxon>Metazoa</taxon>
        <taxon>Chordata</taxon>
        <taxon>Craniata</taxon>
        <taxon>Vertebrata</taxon>
        <taxon>Euteleostomi</taxon>
        <taxon>Mammalia</taxon>
        <taxon>Eutheria</taxon>
        <taxon>Euarchontoglires</taxon>
        <taxon>Glires</taxon>
        <taxon>Rodentia</taxon>
        <taxon>Myomorpha</taxon>
        <taxon>Muroidea</taxon>
        <taxon>Muridae</taxon>
        <taxon>Murinae</taxon>
        <taxon>Rattus</taxon>
    </lineage>
</organism>
<name>FAT2_RAT</name>